<organism>
    <name type="scientific">Alkalilimnicola ehrlichii (strain ATCC BAA-1101 / DSM 17681 / MLHE-1)</name>
    <dbReference type="NCBI Taxonomy" id="187272"/>
    <lineage>
        <taxon>Bacteria</taxon>
        <taxon>Pseudomonadati</taxon>
        <taxon>Pseudomonadota</taxon>
        <taxon>Gammaproteobacteria</taxon>
        <taxon>Chromatiales</taxon>
        <taxon>Ectothiorhodospiraceae</taxon>
        <taxon>Alkalilimnicola</taxon>
    </lineage>
</organism>
<dbReference type="EMBL" id="CP000453">
    <property type="protein sequence ID" value="ABI56711.1"/>
    <property type="molecule type" value="Genomic_DNA"/>
</dbReference>
<dbReference type="RefSeq" id="WP_011629106.1">
    <property type="nucleotide sequence ID" value="NC_008340.1"/>
</dbReference>
<dbReference type="SMR" id="Q0A8X6"/>
<dbReference type="KEGG" id="aeh:Mlg_1362"/>
<dbReference type="eggNOG" id="COG0322">
    <property type="taxonomic scope" value="Bacteria"/>
</dbReference>
<dbReference type="HOGENOM" id="CLU_014841_3_0_6"/>
<dbReference type="OrthoDB" id="9804933at2"/>
<dbReference type="Proteomes" id="UP000001962">
    <property type="component" value="Chromosome"/>
</dbReference>
<dbReference type="GO" id="GO:0005737">
    <property type="term" value="C:cytoplasm"/>
    <property type="evidence" value="ECO:0007669"/>
    <property type="project" value="UniProtKB-SubCell"/>
</dbReference>
<dbReference type="GO" id="GO:0009380">
    <property type="term" value="C:excinuclease repair complex"/>
    <property type="evidence" value="ECO:0007669"/>
    <property type="project" value="InterPro"/>
</dbReference>
<dbReference type="GO" id="GO:0003677">
    <property type="term" value="F:DNA binding"/>
    <property type="evidence" value="ECO:0007669"/>
    <property type="project" value="UniProtKB-UniRule"/>
</dbReference>
<dbReference type="GO" id="GO:0009381">
    <property type="term" value="F:excinuclease ABC activity"/>
    <property type="evidence" value="ECO:0007669"/>
    <property type="project" value="UniProtKB-UniRule"/>
</dbReference>
<dbReference type="GO" id="GO:0006289">
    <property type="term" value="P:nucleotide-excision repair"/>
    <property type="evidence" value="ECO:0007669"/>
    <property type="project" value="UniProtKB-UniRule"/>
</dbReference>
<dbReference type="GO" id="GO:0009432">
    <property type="term" value="P:SOS response"/>
    <property type="evidence" value="ECO:0007669"/>
    <property type="project" value="UniProtKB-UniRule"/>
</dbReference>
<dbReference type="CDD" id="cd10434">
    <property type="entry name" value="GIY-YIG_UvrC_Cho"/>
    <property type="match status" value="1"/>
</dbReference>
<dbReference type="FunFam" id="1.10.150.20:FF:000005">
    <property type="entry name" value="UvrABC system protein C"/>
    <property type="match status" value="1"/>
</dbReference>
<dbReference type="FunFam" id="3.30.420.340:FF:000001">
    <property type="entry name" value="UvrABC system protein C"/>
    <property type="match status" value="1"/>
</dbReference>
<dbReference type="FunFam" id="3.40.1440.10:FF:000001">
    <property type="entry name" value="UvrABC system protein C"/>
    <property type="match status" value="1"/>
</dbReference>
<dbReference type="Gene3D" id="1.10.150.20">
    <property type="entry name" value="5' to 3' exonuclease, C-terminal subdomain"/>
    <property type="match status" value="1"/>
</dbReference>
<dbReference type="Gene3D" id="3.40.1440.10">
    <property type="entry name" value="GIY-YIG endonuclease"/>
    <property type="match status" value="1"/>
</dbReference>
<dbReference type="Gene3D" id="4.10.860.10">
    <property type="entry name" value="UVR domain"/>
    <property type="match status" value="1"/>
</dbReference>
<dbReference type="Gene3D" id="3.30.420.340">
    <property type="entry name" value="UvrC, RNAse H endonuclease domain"/>
    <property type="match status" value="1"/>
</dbReference>
<dbReference type="HAMAP" id="MF_00203">
    <property type="entry name" value="UvrC"/>
    <property type="match status" value="1"/>
</dbReference>
<dbReference type="InterPro" id="IPR000305">
    <property type="entry name" value="GIY-YIG_endonuc"/>
</dbReference>
<dbReference type="InterPro" id="IPR035901">
    <property type="entry name" value="GIY-YIG_endonuc_sf"/>
</dbReference>
<dbReference type="InterPro" id="IPR047296">
    <property type="entry name" value="GIY-YIG_UvrC_Cho"/>
</dbReference>
<dbReference type="InterPro" id="IPR003583">
    <property type="entry name" value="Hlx-hairpin-Hlx_DNA-bd_motif"/>
</dbReference>
<dbReference type="InterPro" id="IPR010994">
    <property type="entry name" value="RuvA_2-like"/>
</dbReference>
<dbReference type="InterPro" id="IPR001943">
    <property type="entry name" value="UVR_dom"/>
</dbReference>
<dbReference type="InterPro" id="IPR036876">
    <property type="entry name" value="UVR_dom_sf"/>
</dbReference>
<dbReference type="InterPro" id="IPR050066">
    <property type="entry name" value="UvrABC_protein_C"/>
</dbReference>
<dbReference type="InterPro" id="IPR004791">
    <property type="entry name" value="UvrC"/>
</dbReference>
<dbReference type="InterPro" id="IPR001162">
    <property type="entry name" value="UvrC_RNase_H_dom"/>
</dbReference>
<dbReference type="InterPro" id="IPR038476">
    <property type="entry name" value="UvrC_RNase_H_dom_sf"/>
</dbReference>
<dbReference type="NCBIfam" id="NF001824">
    <property type="entry name" value="PRK00558.1-5"/>
    <property type="match status" value="1"/>
</dbReference>
<dbReference type="NCBIfam" id="TIGR00194">
    <property type="entry name" value="uvrC"/>
    <property type="match status" value="1"/>
</dbReference>
<dbReference type="PANTHER" id="PTHR30562:SF1">
    <property type="entry name" value="UVRABC SYSTEM PROTEIN C"/>
    <property type="match status" value="1"/>
</dbReference>
<dbReference type="PANTHER" id="PTHR30562">
    <property type="entry name" value="UVRC/OXIDOREDUCTASE"/>
    <property type="match status" value="1"/>
</dbReference>
<dbReference type="Pfam" id="PF01541">
    <property type="entry name" value="GIY-YIG"/>
    <property type="match status" value="1"/>
</dbReference>
<dbReference type="Pfam" id="PF14520">
    <property type="entry name" value="HHH_5"/>
    <property type="match status" value="1"/>
</dbReference>
<dbReference type="Pfam" id="PF02151">
    <property type="entry name" value="UVR"/>
    <property type="match status" value="1"/>
</dbReference>
<dbReference type="Pfam" id="PF22920">
    <property type="entry name" value="UvrC_RNaseH"/>
    <property type="match status" value="1"/>
</dbReference>
<dbReference type="Pfam" id="PF08459">
    <property type="entry name" value="UvrC_RNaseH_dom"/>
    <property type="match status" value="1"/>
</dbReference>
<dbReference type="SMART" id="SM00465">
    <property type="entry name" value="GIYc"/>
    <property type="match status" value="1"/>
</dbReference>
<dbReference type="SMART" id="SM00278">
    <property type="entry name" value="HhH1"/>
    <property type="match status" value="2"/>
</dbReference>
<dbReference type="SUPFAM" id="SSF46600">
    <property type="entry name" value="C-terminal UvrC-binding domain of UvrB"/>
    <property type="match status" value="1"/>
</dbReference>
<dbReference type="SUPFAM" id="SSF82771">
    <property type="entry name" value="GIY-YIG endonuclease"/>
    <property type="match status" value="1"/>
</dbReference>
<dbReference type="SUPFAM" id="SSF47781">
    <property type="entry name" value="RuvA domain 2-like"/>
    <property type="match status" value="1"/>
</dbReference>
<dbReference type="PROSITE" id="PS50164">
    <property type="entry name" value="GIY_YIG"/>
    <property type="match status" value="1"/>
</dbReference>
<dbReference type="PROSITE" id="PS50151">
    <property type="entry name" value="UVR"/>
    <property type="match status" value="1"/>
</dbReference>
<dbReference type="PROSITE" id="PS50165">
    <property type="entry name" value="UVRC"/>
    <property type="match status" value="1"/>
</dbReference>
<gene>
    <name evidence="1" type="primary">uvrC</name>
    <name type="ordered locus">Mlg_1362</name>
</gene>
<name>UVRC_ALKEH</name>
<reference key="1">
    <citation type="submission" date="2006-08" db="EMBL/GenBank/DDBJ databases">
        <title>Complete sequence of Alkalilimnicola ehrilichei MLHE-1.</title>
        <authorList>
            <person name="Copeland A."/>
            <person name="Lucas S."/>
            <person name="Lapidus A."/>
            <person name="Barry K."/>
            <person name="Detter J.C."/>
            <person name="Glavina del Rio T."/>
            <person name="Hammon N."/>
            <person name="Israni S."/>
            <person name="Dalin E."/>
            <person name="Tice H."/>
            <person name="Pitluck S."/>
            <person name="Sims D."/>
            <person name="Brettin T."/>
            <person name="Bruce D."/>
            <person name="Han C."/>
            <person name="Tapia R."/>
            <person name="Gilna P."/>
            <person name="Schmutz J."/>
            <person name="Larimer F."/>
            <person name="Land M."/>
            <person name="Hauser L."/>
            <person name="Kyrpides N."/>
            <person name="Mikhailova N."/>
            <person name="Oremland R.S."/>
            <person name="Hoeft S.E."/>
            <person name="Switzer-Blum J."/>
            <person name="Kulp T."/>
            <person name="King G."/>
            <person name="Tabita R."/>
            <person name="Witte B."/>
            <person name="Santini J.M."/>
            <person name="Basu P."/>
            <person name="Hollibaugh J.T."/>
            <person name="Xie G."/>
            <person name="Stolz J.F."/>
            <person name="Richardson P."/>
        </authorList>
    </citation>
    <scope>NUCLEOTIDE SEQUENCE [LARGE SCALE GENOMIC DNA]</scope>
    <source>
        <strain>ATCC BAA-1101 / DSM 17681 / MLHE-1</strain>
    </source>
</reference>
<keyword id="KW-0963">Cytoplasm</keyword>
<keyword id="KW-0227">DNA damage</keyword>
<keyword id="KW-0228">DNA excision</keyword>
<keyword id="KW-0234">DNA repair</keyword>
<keyword id="KW-0267">Excision nuclease</keyword>
<keyword id="KW-1185">Reference proteome</keyword>
<keyword id="KW-0742">SOS response</keyword>
<sequence>MTDVPSPFDPKAFVRSLTQRPGVYRMVDGRGEVLYVGKARNLKKRVASYFTRSRKSARIELMLTQVQDIQVTVTHTEAEALILENTLIKELRPRYNVLLRDDKSYPWIYLSSHQDFPRLSFHRGARKGPGRWFGPFPSGHAVRETLNTLQKVFRIRQCQDSFFSNRSRPCLQHQIKRCTAPCVGYISREAYQEDVRHAVLFLEGRSNQVIEELGARMEAASERLEFEAAAQYRDRIQALQAVQERQYIVGEKGDLDVIACVSDGVTACVTVFFFRQGRNLGNKVFYPRIPEGADEAEVLAAFLARYYIGRKAPPELVISHTIPEQKVLGEALSRESGHRVRVTHSVRKERRRWLEMALTNARHALTARTSTQAMALHRLEALQDALQLPALPERIECFDISHTRGEATVAACVVFNQDGPLKSDYRRFNIRGITPGDDYAAMRQALSRRYQRLKKGEGVLPDILLIDGGKGQVAQAEAVLEELQVDDVYLVGIAKGPERRPGEETLILSDEDGREKTLGPDAPALQLLQQVRDEAHRFAIAGHRQQRGKARTRSALEDIPGLGPKRRQALLRHFGGLKAVARAGVEDLARTPGISRALAQKVYDHYHGDSG</sequence>
<accession>Q0A8X6</accession>
<protein>
    <recommendedName>
        <fullName evidence="1">UvrABC system protein C</fullName>
        <shortName evidence="1">Protein UvrC</shortName>
    </recommendedName>
    <alternativeName>
        <fullName evidence="1">Excinuclease ABC subunit C</fullName>
    </alternativeName>
</protein>
<feature type="chain" id="PRO_0000264862" description="UvrABC system protein C">
    <location>
        <begin position="1"/>
        <end position="611"/>
    </location>
</feature>
<feature type="domain" description="GIY-YIG" evidence="1">
    <location>
        <begin position="19"/>
        <end position="97"/>
    </location>
</feature>
<feature type="domain" description="UVR" evidence="1">
    <location>
        <begin position="207"/>
        <end position="242"/>
    </location>
</feature>
<proteinExistence type="inferred from homology"/>
<evidence type="ECO:0000255" key="1">
    <source>
        <dbReference type="HAMAP-Rule" id="MF_00203"/>
    </source>
</evidence>
<comment type="function">
    <text evidence="1">The UvrABC repair system catalyzes the recognition and processing of DNA lesions. UvrC both incises the 5' and 3' sides of the lesion. The N-terminal half is responsible for the 3' incision and the C-terminal half is responsible for the 5' incision.</text>
</comment>
<comment type="subunit">
    <text evidence="1">Interacts with UvrB in an incision complex.</text>
</comment>
<comment type="subcellular location">
    <subcellularLocation>
        <location evidence="1">Cytoplasm</location>
    </subcellularLocation>
</comment>
<comment type="similarity">
    <text evidence="1">Belongs to the UvrC family.</text>
</comment>